<reference key="1">
    <citation type="journal article" date="2010" name="Genome Biol. Evol.">
        <title>Continuing evolution of Burkholderia mallei through genome reduction and large-scale rearrangements.</title>
        <authorList>
            <person name="Losada L."/>
            <person name="Ronning C.M."/>
            <person name="DeShazer D."/>
            <person name="Woods D."/>
            <person name="Fedorova N."/>
            <person name="Kim H.S."/>
            <person name="Shabalina S.A."/>
            <person name="Pearson T.R."/>
            <person name="Brinkac L."/>
            <person name="Tan P."/>
            <person name="Nandi T."/>
            <person name="Crabtree J."/>
            <person name="Badger J."/>
            <person name="Beckstrom-Sternberg S."/>
            <person name="Saqib M."/>
            <person name="Schutzer S.E."/>
            <person name="Keim P."/>
            <person name="Nierman W.C."/>
        </authorList>
    </citation>
    <scope>NUCLEOTIDE SEQUENCE [LARGE SCALE GENOMIC DNA]</scope>
    <source>
        <strain>1710b</strain>
    </source>
</reference>
<name>HBOH_BURP1</name>
<evidence type="ECO:0000255" key="1">
    <source>
        <dbReference type="HAMAP-Rule" id="MF_01906"/>
    </source>
</evidence>
<organism>
    <name type="scientific">Burkholderia pseudomallei (strain 1710b)</name>
    <dbReference type="NCBI Taxonomy" id="320372"/>
    <lineage>
        <taxon>Bacteria</taxon>
        <taxon>Pseudomonadati</taxon>
        <taxon>Pseudomonadota</taxon>
        <taxon>Betaproteobacteria</taxon>
        <taxon>Burkholderiales</taxon>
        <taxon>Burkholderiaceae</taxon>
        <taxon>Burkholderia</taxon>
        <taxon>pseudomallei group</taxon>
    </lineage>
</organism>
<gene>
    <name type="ordered locus">BURPS1710b_3200</name>
</gene>
<feature type="signal peptide" evidence="1">
    <location>
        <begin position="1"/>
        <end position="33"/>
    </location>
</feature>
<feature type="chain" id="PRO_0000314423" description="D-(-)-3-hydroxybutyrate oligomer hydrolase">
    <location>
        <begin position="34"/>
        <end position="699"/>
    </location>
</feature>
<feature type="active site" description="Charge relay system" evidence="1">
    <location>
        <position position="311"/>
    </location>
</feature>
<comment type="function">
    <text evidence="1">Participates in the degradation of poly-3-hydroxybutyrate (PHB). It works downstream of poly(3-hydroxybutyrate) depolymerase, hydrolyzing D(-)-3-hydroxybutyrate oligomers of various length (3HB-oligomers) into 3HB-monomers.</text>
</comment>
<comment type="catalytic activity">
    <reaction evidence="1">
        <text>(3R)-hydroxybutanoate dimer + H2O = 2 (R)-3-hydroxybutanoate + H(+)</text>
        <dbReference type="Rhea" id="RHEA:10172"/>
        <dbReference type="ChEBI" id="CHEBI:10979"/>
        <dbReference type="ChEBI" id="CHEBI:10983"/>
        <dbReference type="ChEBI" id="CHEBI:15377"/>
        <dbReference type="ChEBI" id="CHEBI:15378"/>
        <dbReference type="EC" id="3.1.1.22"/>
    </reaction>
</comment>
<comment type="pathway">
    <text evidence="1">Lipid metabolism; butanoate metabolism.</text>
</comment>
<comment type="subcellular location">
    <subcellularLocation>
        <location evidence="1">Secreted</location>
    </subcellularLocation>
</comment>
<comment type="similarity">
    <text evidence="1">Belongs to the D-(-)-3-hydroxybutyrate oligomer hydrolase family.</text>
</comment>
<accession>Q3JPD1</accession>
<sequence length="699" mass="71678">MTAIRGGSRRAPGLALALLGGVLLGACHGDENAQVNALPGFVSGSVRKTAYDGASDDLLTAGLGKTGLGSDTRPGFANPAQPSAAELRRLAIYSNYRALVDITPNGGYGRFWGPNVDLAGNDTLGEGKIAGTEYLAYSDDGSGRKNVTLLVQVPASFDPANPCIVTATASGSRGVYGAIAAAGEWGLKRGCAVAYNDKGGGNGAHEIGTGVVTLIDGTLATASSAGSSSLFTASESSSTLAAFNSAFPNRYAYKHAHSQQNPEQDWGRVTLQAVEFAYWALNEQFGPVVDGTRHGIRYRPGDITTIAASVSNGGGSALAAAEQDTRGWITAVVVGEPQINVRMTPGVTVEQGGAPVPSFGRPLADYATLANLLQPCAAAAVAATGAPYLSALPMGVTQSIRTQRCATLAAAGLVSGADTASQASDALAQLHAAGYLADSDLLQAPMWDSQAMPAIAVTYANAYTRSRVTDNLCNFSFATTNPVTGAVAAPAVSPMTNLFGAGNGVPPTNGINLVFNGASGGVDHRLATPDASFAGAFCLRQLWTANQLGIGTNVDAVRVAANLQHKPAIIVHGRSDALVPVNHASRAYVAQNSATEGRASQLSFYEVTNGQHFDAFLSVPGFDTRFVPVHYYDEQALNLMWNHLKSGAPLPPSQVIRTVPRGGVPGAAPALSTANLPPIVQSPGANAIAVNAGVIDVPL</sequence>
<keyword id="KW-0378">Hydrolase</keyword>
<keyword id="KW-0964">Secreted</keyword>
<keyword id="KW-0732">Signal</keyword>
<proteinExistence type="inferred from homology"/>
<dbReference type="EC" id="3.1.1.22" evidence="1"/>
<dbReference type="EMBL" id="CP000124">
    <property type="protein sequence ID" value="ABA50719.1"/>
    <property type="molecule type" value="Genomic_DNA"/>
</dbReference>
<dbReference type="RefSeq" id="WP_004532230.1">
    <property type="nucleotide sequence ID" value="NC_007434.1"/>
</dbReference>
<dbReference type="ESTHER" id="burps-hboh">
    <property type="family name" value="OHBut_olig_hydro_put"/>
</dbReference>
<dbReference type="EnsemblBacteria" id="ABA50719">
    <property type="protein sequence ID" value="ABA50719"/>
    <property type="gene ID" value="BURPS1710b_3200"/>
</dbReference>
<dbReference type="KEGG" id="bpm:BURPS1710b_3200"/>
<dbReference type="HOGENOM" id="CLU_420258_0_0_4"/>
<dbReference type="UniPathway" id="UPA00863"/>
<dbReference type="Proteomes" id="UP000002700">
    <property type="component" value="Chromosome I"/>
</dbReference>
<dbReference type="GO" id="GO:0005615">
    <property type="term" value="C:extracellular space"/>
    <property type="evidence" value="ECO:0007669"/>
    <property type="project" value="InterPro"/>
</dbReference>
<dbReference type="GO" id="GO:0047989">
    <property type="term" value="F:hydroxybutyrate-dimer hydrolase activity"/>
    <property type="evidence" value="ECO:0007669"/>
    <property type="project" value="UniProtKB-UniRule"/>
</dbReference>
<dbReference type="GO" id="GO:0019605">
    <property type="term" value="P:butyrate metabolic process"/>
    <property type="evidence" value="ECO:0007669"/>
    <property type="project" value="UniProtKB-UniRule"/>
</dbReference>
<dbReference type="HAMAP" id="MF_01906">
    <property type="entry name" value="3HBOH"/>
    <property type="match status" value="1"/>
</dbReference>
<dbReference type="InterPro" id="IPR029058">
    <property type="entry name" value="AB_hydrolase_fold"/>
</dbReference>
<dbReference type="InterPro" id="IPR016582">
    <property type="entry name" value="OHBut_olig_hydro_put"/>
</dbReference>
<dbReference type="Pfam" id="PF10605">
    <property type="entry name" value="3HBOH"/>
    <property type="match status" value="1"/>
</dbReference>
<dbReference type="PIRSF" id="PIRSF011409">
    <property type="entry name" value="HObutyrate_olig_hydrol"/>
    <property type="match status" value="1"/>
</dbReference>
<dbReference type="SUPFAM" id="SSF53474">
    <property type="entry name" value="alpha/beta-Hydrolases"/>
    <property type="match status" value="1"/>
</dbReference>
<protein>
    <recommendedName>
        <fullName evidence="1">D-(-)-3-hydroxybutyrate oligomer hydrolase</fullName>
        <shortName evidence="1">3HB-oligomer hydrolase</shortName>
        <shortName evidence="1">3HBOH</shortName>
        <ecNumber evidence="1">3.1.1.22</ecNumber>
    </recommendedName>
</protein>